<protein>
    <recommendedName>
        <fullName evidence="1">UDP-3-O-acyl-N-acetylglucosamine deacetylase</fullName>
        <shortName evidence="1">UDP-3-O-acyl-GlcNAc deacetylase</shortName>
        <ecNumber evidence="1">3.5.1.108</ecNumber>
    </recommendedName>
    <alternativeName>
        <fullName evidence="1">UDP-3-O-[R-3-hydroxymyristoyl]-N-acetylglucosamine deacetylase</fullName>
    </alternativeName>
</protein>
<proteinExistence type="inferred from homology"/>
<organism>
    <name type="scientific">Xylella fastidiosa (strain 9a5c)</name>
    <dbReference type="NCBI Taxonomy" id="160492"/>
    <lineage>
        <taxon>Bacteria</taxon>
        <taxon>Pseudomonadati</taxon>
        <taxon>Pseudomonadota</taxon>
        <taxon>Gammaproteobacteria</taxon>
        <taxon>Lysobacterales</taxon>
        <taxon>Lysobacteraceae</taxon>
        <taxon>Xylella</taxon>
    </lineage>
</organism>
<reference key="1">
    <citation type="journal article" date="2000" name="Nature">
        <title>The genome sequence of the plant pathogen Xylella fastidiosa.</title>
        <authorList>
            <person name="Simpson A.J.G."/>
            <person name="Reinach F.C."/>
            <person name="Arruda P."/>
            <person name="Abreu F.A."/>
            <person name="Acencio M."/>
            <person name="Alvarenga R."/>
            <person name="Alves L.M.C."/>
            <person name="Araya J.E."/>
            <person name="Baia G.S."/>
            <person name="Baptista C.S."/>
            <person name="Barros M.H."/>
            <person name="Bonaccorsi E.D."/>
            <person name="Bordin S."/>
            <person name="Bove J.M."/>
            <person name="Briones M.R.S."/>
            <person name="Bueno M.R.P."/>
            <person name="Camargo A.A."/>
            <person name="Camargo L.E.A."/>
            <person name="Carraro D.M."/>
            <person name="Carrer H."/>
            <person name="Colauto N.B."/>
            <person name="Colombo C."/>
            <person name="Costa F.F."/>
            <person name="Costa M.C.R."/>
            <person name="Costa-Neto C.M."/>
            <person name="Coutinho L.L."/>
            <person name="Cristofani M."/>
            <person name="Dias-Neto E."/>
            <person name="Docena C."/>
            <person name="El-Dorry H."/>
            <person name="Facincani A.P."/>
            <person name="Ferreira A.J.S."/>
            <person name="Ferreira V.C.A."/>
            <person name="Ferro J.A."/>
            <person name="Fraga J.S."/>
            <person name="Franca S.C."/>
            <person name="Franco M.C."/>
            <person name="Frohme M."/>
            <person name="Furlan L.R."/>
            <person name="Garnier M."/>
            <person name="Goldman G.H."/>
            <person name="Goldman M.H.S."/>
            <person name="Gomes S.L."/>
            <person name="Gruber A."/>
            <person name="Ho P.L."/>
            <person name="Hoheisel J.D."/>
            <person name="Junqueira M.L."/>
            <person name="Kemper E.L."/>
            <person name="Kitajima J.P."/>
            <person name="Krieger J.E."/>
            <person name="Kuramae E.E."/>
            <person name="Laigret F."/>
            <person name="Lambais M.R."/>
            <person name="Leite L.C.C."/>
            <person name="Lemos E.G.M."/>
            <person name="Lemos M.V.F."/>
            <person name="Lopes S.A."/>
            <person name="Lopes C.R."/>
            <person name="Machado J.A."/>
            <person name="Machado M.A."/>
            <person name="Madeira A.M.B.N."/>
            <person name="Madeira H.M.F."/>
            <person name="Marino C.L."/>
            <person name="Marques M.V."/>
            <person name="Martins E.A.L."/>
            <person name="Martins E.M.F."/>
            <person name="Matsukuma A.Y."/>
            <person name="Menck C.F.M."/>
            <person name="Miracca E.C."/>
            <person name="Miyaki C.Y."/>
            <person name="Monteiro-Vitorello C.B."/>
            <person name="Moon D.H."/>
            <person name="Nagai M.A."/>
            <person name="Nascimento A.L.T.O."/>
            <person name="Netto L.E.S."/>
            <person name="Nhani A. Jr."/>
            <person name="Nobrega F.G."/>
            <person name="Nunes L.R."/>
            <person name="Oliveira M.A."/>
            <person name="de Oliveira M.C."/>
            <person name="de Oliveira R.C."/>
            <person name="Palmieri D.A."/>
            <person name="Paris A."/>
            <person name="Peixoto B.R."/>
            <person name="Pereira G.A.G."/>
            <person name="Pereira H.A. Jr."/>
            <person name="Pesquero J.B."/>
            <person name="Quaggio R.B."/>
            <person name="Roberto P.G."/>
            <person name="Rodrigues V."/>
            <person name="de Rosa A.J.M."/>
            <person name="de Rosa V.E. Jr."/>
            <person name="de Sa R.G."/>
            <person name="Santelli R.V."/>
            <person name="Sawasaki H.E."/>
            <person name="da Silva A.C.R."/>
            <person name="da Silva A.M."/>
            <person name="da Silva F.R."/>
            <person name="Silva W.A. Jr."/>
            <person name="da Silveira J.F."/>
            <person name="Silvestri M.L.Z."/>
            <person name="Siqueira W.J."/>
            <person name="de Souza A.A."/>
            <person name="de Souza A.P."/>
            <person name="Terenzi M.F."/>
            <person name="Truffi D."/>
            <person name="Tsai S.M."/>
            <person name="Tsuhako M.H."/>
            <person name="Vallada H."/>
            <person name="Van Sluys M.A."/>
            <person name="Verjovski-Almeida S."/>
            <person name="Vettore A.L."/>
            <person name="Zago M.A."/>
            <person name="Zatz M."/>
            <person name="Meidanis J."/>
            <person name="Setubal J.C."/>
        </authorList>
    </citation>
    <scope>NUCLEOTIDE SEQUENCE [LARGE SCALE GENOMIC DNA]</scope>
    <source>
        <strain>9a5c</strain>
    </source>
</reference>
<sequence>MSQQRTLNNTIRATGVGLHSGNKIHITLRPAPVNHGIVFRRVDLDPVVEIPASGDLVTEVILCTGLTRNGAKVQTVEHLMSAFAGLGIDNAIVDLSSAELPIMDGSSAPFVFLLQSAGILEQNAAKRFIRIKRSVEVRQGDKVAKFSPYDGYKLGFTIEFDHPMIPHKQSHYEMEFSTAAYIKEISLARTFGFMHDLEDMRERNLGLGGSMDNAILLDDFRVLNEDGLRYGNEFVRHKILDAIGDLYLIGGPILGAYEAFKSGHALNNKLVRAVLADETSWEWISFPSSAAEQPPVVYTHPACI</sequence>
<accession>Q9PF75</accession>
<comment type="function">
    <text evidence="1">Catalyzes the hydrolysis of UDP-3-O-myristoyl-N-acetylglucosamine to form UDP-3-O-myristoylglucosamine and acetate, the committed step in lipid A biosynthesis.</text>
</comment>
<comment type="catalytic activity">
    <reaction evidence="1">
        <text>a UDP-3-O-[(3R)-3-hydroxyacyl]-N-acetyl-alpha-D-glucosamine + H2O = a UDP-3-O-[(3R)-3-hydroxyacyl]-alpha-D-glucosamine + acetate</text>
        <dbReference type="Rhea" id="RHEA:67816"/>
        <dbReference type="ChEBI" id="CHEBI:15377"/>
        <dbReference type="ChEBI" id="CHEBI:30089"/>
        <dbReference type="ChEBI" id="CHEBI:137740"/>
        <dbReference type="ChEBI" id="CHEBI:173225"/>
        <dbReference type="EC" id="3.5.1.108"/>
    </reaction>
</comment>
<comment type="cofactor">
    <cofactor evidence="1">
        <name>Zn(2+)</name>
        <dbReference type="ChEBI" id="CHEBI:29105"/>
    </cofactor>
</comment>
<comment type="pathway">
    <text evidence="1">Glycolipid biosynthesis; lipid IV(A) biosynthesis; lipid IV(A) from (3R)-3-hydroxytetradecanoyl-[acyl-carrier-protein] and UDP-N-acetyl-alpha-D-glucosamine: step 2/6.</text>
</comment>
<comment type="similarity">
    <text evidence="1">Belongs to the LpxC family.</text>
</comment>
<feature type="chain" id="PRO_0000191969" description="UDP-3-O-acyl-N-acetylglucosamine deacetylase">
    <location>
        <begin position="1"/>
        <end position="304"/>
    </location>
</feature>
<feature type="active site" description="Proton donor" evidence="1">
    <location>
        <position position="264"/>
    </location>
</feature>
<feature type="binding site" evidence="1">
    <location>
        <position position="78"/>
    </location>
    <ligand>
        <name>Zn(2+)</name>
        <dbReference type="ChEBI" id="CHEBI:29105"/>
    </ligand>
</feature>
<feature type="binding site" evidence="1">
    <location>
        <position position="237"/>
    </location>
    <ligand>
        <name>Zn(2+)</name>
        <dbReference type="ChEBI" id="CHEBI:29105"/>
    </ligand>
</feature>
<feature type="binding site" evidence="1">
    <location>
        <position position="241"/>
    </location>
    <ligand>
        <name>Zn(2+)</name>
        <dbReference type="ChEBI" id="CHEBI:29105"/>
    </ligand>
</feature>
<name>LPXC_XYLFA</name>
<evidence type="ECO:0000255" key="1">
    <source>
        <dbReference type="HAMAP-Rule" id="MF_00388"/>
    </source>
</evidence>
<dbReference type="EC" id="3.5.1.108" evidence="1"/>
<dbReference type="EMBL" id="AE003849">
    <property type="protein sequence ID" value="AAF83613.1"/>
    <property type="molecule type" value="Genomic_DNA"/>
</dbReference>
<dbReference type="PIR" id="C82760">
    <property type="entry name" value="C82760"/>
</dbReference>
<dbReference type="RefSeq" id="WP_010893324.1">
    <property type="nucleotide sequence ID" value="NC_002488.3"/>
</dbReference>
<dbReference type="SMR" id="Q9PF75"/>
<dbReference type="STRING" id="160492.XF_0803"/>
<dbReference type="KEGG" id="xfa:XF_0803"/>
<dbReference type="eggNOG" id="COG0774">
    <property type="taxonomic scope" value="Bacteria"/>
</dbReference>
<dbReference type="HOGENOM" id="CLU_046528_1_0_6"/>
<dbReference type="UniPathway" id="UPA00359">
    <property type="reaction ID" value="UER00478"/>
</dbReference>
<dbReference type="Proteomes" id="UP000000812">
    <property type="component" value="Chromosome"/>
</dbReference>
<dbReference type="GO" id="GO:0016020">
    <property type="term" value="C:membrane"/>
    <property type="evidence" value="ECO:0007669"/>
    <property type="project" value="GOC"/>
</dbReference>
<dbReference type="GO" id="GO:0046872">
    <property type="term" value="F:metal ion binding"/>
    <property type="evidence" value="ECO:0007669"/>
    <property type="project" value="UniProtKB-KW"/>
</dbReference>
<dbReference type="GO" id="GO:0103117">
    <property type="term" value="F:UDP-3-O-acyl-N-acetylglucosamine deacetylase activity"/>
    <property type="evidence" value="ECO:0007669"/>
    <property type="project" value="UniProtKB-UniRule"/>
</dbReference>
<dbReference type="GO" id="GO:0009245">
    <property type="term" value="P:lipid A biosynthetic process"/>
    <property type="evidence" value="ECO:0007669"/>
    <property type="project" value="UniProtKB-UniRule"/>
</dbReference>
<dbReference type="Gene3D" id="3.30.230.20">
    <property type="entry name" value="lpxc deacetylase, domain 1"/>
    <property type="match status" value="1"/>
</dbReference>
<dbReference type="Gene3D" id="3.30.1700.10">
    <property type="entry name" value="lpxc deacetylase, domain 2"/>
    <property type="match status" value="1"/>
</dbReference>
<dbReference type="HAMAP" id="MF_00388">
    <property type="entry name" value="LpxC"/>
    <property type="match status" value="1"/>
</dbReference>
<dbReference type="InterPro" id="IPR020568">
    <property type="entry name" value="Ribosomal_Su5_D2-typ_SF"/>
</dbReference>
<dbReference type="InterPro" id="IPR004463">
    <property type="entry name" value="UDP-acyl_GlcNac_deAcase"/>
</dbReference>
<dbReference type="InterPro" id="IPR011334">
    <property type="entry name" value="UDP-acyl_GlcNac_deAcase_C"/>
</dbReference>
<dbReference type="InterPro" id="IPR015870">
    <property type="entry name" value="UDP-acyl_N-AcGlcN_deAcase_N"/>
</dbReference>
<dbReference type="NCBIfam" id="TIGR00325">
    <property type="entry name" value="lpxC"/>
    <property type="match status" value="1"/>
</dbReference>
<dbReference type="PANTHER" id="PTHR33694">
    <property type="entry name" value="UDP-3-O-ACYL-N-ACETYLGLUCOSAMINE DEACETYLASE 1, MITOCHONDRIAL-RELATED"/>
    <property type="match status" value="1"/>
</dbReference>
<dbReference type="PANTHER" id="PTHR33694:SF1">
    <property type="entry name" value="UDP-3-O-ACYL-N-ACETYLGLUCOSAMINE DEACETYLASE 1, MITOCHONDRIAL-RELATED"/>
    <property type="match status" value="1"/>
</dbReference>
<dbReference type="Pfam" id="PF03331">
    <property type="entry name" value="LpxC"/>
    <property type="match status" value="1"/>
</dbReference>
<dbReference type="SUPFAM" id="SSF54211">
    <property type="entry name" value="Ribosomal protein S5 domain 2-like"/>
    <property type="match status" value="2"/>
</dbReference>
<gene>
    <name evidence="1" type="primary">lpxC</name>
    <name type="ordered locus">XF_0803</name>
</gene>
<keyword id="KW-0378">Hydrolase</keyword>
<keyword id="KW-0441">Lipid A biosynthesis</keyword>
<keyword id="KW-0444">Lipid biosynthesis</keyword>
<keyword id="KW-0443">Lipid metabolism</keyword>
<keyword id="KW-0479">Metal-binding</keyword>
<keyword id="KW-0862">Zinc</keyword>